<proteinExistence type="evidence at protein level"/>
<comment type="function">
    <text evidence="1 3">This recombinant serine protease inhibitor inhibits both trypsin (Ki=2.5 nM) and chymotrypsin (Ki=30 nM) (PubMed:17447883). It may also inhibit the TRPV1 receptor, a receptor of the pain pathway (By similarity). In vivo, shows anti-histamine activity, since it dose-dependently weakens the clinical manifestation of the allergic reaction induced by histamine injection. In vivo, does not show toxicity to mice by intraperitoneal injection (PubMed:17447883).</text>
</comment>
<comment type="subcellular location">
    <subcellularLocation>
        <location evidence="5">Secreted</location>
    </subcellularLocation>
    <subcellularLocation>
        <location evidence="5">Nematocyst</location>
    </subcellularLocation>
</comment>
<comment type="mass spectrometry" mass="6086.5" method="MALDI" evidence="3"/>
<comment type="miscellaneous">
    <text evidence="5">A synonymy between H.magnifica and R.crispa is controversial.</text>
</comment>
<comment type="similarity">
    <text evidence="5">Belongs to the venom Kunitz-type family. Sea anemone type 2 potassium channel toxin subfamily.</text>
</comment>
<protein>
    <recommendedName>
        <fullName evidence="5">PI-stichotoxin-Hcr2l</fullName>
        <shortName evidence="5">PI-SHTX-Hcr2l</shortName>
    </recommendedName>
    <alternativeName>
        <fullName evidence="4">Kunitz-type serine protease inhibitor RmIn II</fullName>
    </alternativeName>
</protein>
<sequence length="15" mass="1489">GSTCLEPKVVGPCKA</sequence>
<dbReference type="GO" id="GO:0005576">
    <property type="term" value="C:extracellular region"/>
    <property type="evidence" value="ECO:0007669"/>
    <property type="project" value="UniProtKB-SubCell"/>
</dbReference>
<dbReference type="GO" id="GO:0042151">
    <property type="term" value="C:nematocyst"/>
    <property type="evidence" value="ECO:0007669"/>
    <property type="project" value="UniProtKB-SubCell"/>
</dbReference>
<dbReference type="GO" id="GO:0099106">
    <property type="term" value="F:ion channel regulator activity"/>
    <property type="evidence" value="ECO:0007669"/>
    <property type="project" value="UniProtKB-KW"/>
</dbReference>
<dbReference type="GO" id="GO:0004867">
    <property type="term" value="F:serine-type endopeptidase inhibitor activity"/>
    <property type="evidence" value="ECO:0007669"/>
    <property type="project" value="UniProtKB-KW"/>
</dbReference>
<dbReference type="GO" id="GO:0090729">
    <property type="term" value="F:toxin activity"/>
    <property type="evidence" value="ECO:0007669"/>
    <property type="project" value="UniProtKB-KW"/>
</dbReference>
<evidence type="ECO:0000250" key="1">
    <source>
        <dbReference type="UniProtKB" id="B2G331"/>
    </source>
</evidence>
<evidence type="ECO:0000250" key="2">
    <source>
        <dbReference type="UniProtKB" id="P00974"/>
    </source>
</evidence>
<evidence type="ECO:0000269" key="3">
    <source>
    </source>
</evidence>
<evidence type="ECO:0000303" key="4">
    <source>
    </source>
</evidence>
<evidence type="ECO:0000305" key="5"/>
<keyword id="KW-0903">Direct protein sequencing</keyword>
<keyword id="KW-1015">Disulfide bond</keyword>
<keyword id="KW-0872">Ion channel impairing toxin</keyword>
<keyword id="KW-0166">Nematocyst</keyword>
<keyword id="KW-0646">Protease inhibitor</keyword>
<keyword id="KW-0964">Secreted</keyword>
<keyword id="KW-0722">Serine protease inhibitor</keyword>
<keyword id="KW-0800">Toxin</keyword>
<feature type="chain" id="PRO_0000454103" description="PI-stichotoxin-Hcr2l">
    <location>
        <begin position="1"/>
        <end position="15" status="greater than"/>
    </location>
</feature>
<feature type="site" description="Reactive bond for trypsin" evidence="2">
    <location>
        <begin position="14"/>
        <end position="15"/>
    </location>
</feature>
<feature type="disulfide bond" evidence="5">
    <location>
        <begin position="4"/>
        <end status="unknown"/>
    </location>
</feature>
<feature type="disulfide bond" evidence="5">
    <location>
        <begin position="13"/>
        <end status="unknown"/>
    </location>
</feature>
<feature type="non-terminal residue" evidence="5">
    <location>
        <position position="15"/>
    </location>
</feature>
<reference key="1">
    <citation type="journal article" date="2007" name="Biochemistry (Mosc.)">
        <title>Proteinase inhibitors from the tropical sea anemone Radianthus macrodactylus: isolation and characteristic.</title>
        <authorList>
            <person name="Sokotun I.N."/>
            <person name="Il'ina A.P."/>
            <person name="Monastyrnaya M.M."/>
            <person name="Leychenko E.V."/>
            <person name="Es'kov A.A."/>
            <person name="Anastuk S.D."/>
            <person name="Kozlovskaya E.P."/>
        </authorList>
    </citation>
    <scope>PROTEIN SEQUENCE</scope>
    <scope>FUNCTION</scope>
    <scope>MASS SPECTROMETRY</scope>
</reference>
<organism>
    <name type="scientific">Radianthus crispa</name>
    <name type="common">Leathery sea anemone</name>
    <name type="synonym">Heteractis crispa</name>
    <dbReference type="NCBI Taxonomy" id="3122430"/>
    <lineage>
        <taxon>Eukaryota</taxon>
        <taxon>Metazoa</taxon>
        <taxon>Cnidaria</taxon>
        <taxon>Anthozoa</taxon>
        <taxon>Hexacorallia</taxon>
        <taxon>Actiniaria</taxon>
        <taxon>Stichodactylidae</taxon>
        <taxon>Radianthus</taxon>
    </lineage>
</organism>
<name>VKT2L_RADCR</name>
<accession>P0DV02</accession>